<comment type="function">
    <text evidence="1">Part of the high-affinity ATP-driven potassium transport (or Kdp) system, which catalyzes the hydrolysis of ATP coupled with the electrogenic transport of potassium into the cytoplasm. This subunit is responsible for energy coupling to the transport system and for the release of the potassium ions to the cytoplasm.</text>
</comment>
<comment type="catalytic activity">
    <reaction evidence="1">
        <text>K(+)(out) + ATP + H2O = K(+)(in) + ADP + phosphate + H(+)</text>
        <dbReference type="Rhea" id="RHEA:16777"/>
        <dbReference type="ChEBI" id="CHEBI:15377"/>
        <dbReference type="ChEBI" id="CHEBI:15378"/>
        <dbReference type="ChEBI" id="CHEBI:29103"/>
        <dbReference type="ChEBI" id="CHEBI:30616"/>
        <dbReference type="ChEBI" id="CHEBI:43474"/>
        <dbReference type="ChEBI" id="CHEBI:456216"/>
        <dbReference type="EC" id="7.2.2.6"/>
    </reaction>
    <physiologicalReaction direction="left-to-right" evidence="1">
        <dbReference type="Rhea" id="RHEA:16778"/>
    </physiologicalReaction>
</comment>
<comment type="subunit">
    <text evidence="1">The system is composed of three essential subunits: KdpA, KdpB and KdpC.</text>
</comment>
<comment type="subcellular location">
    <subcellularLocation>
        <location evidence="1">Cell membrane</location>
        <topology evidence="1">Multi-pass membrane protein</topology>
    </subcellularLocation>
</comment>
<comment type="similarity">
    <text evidence="1">Belongs to the cation transport ATPase (P-type) (TC 3.A.3) family. Type IA subfamily.</text>
</comment>
<evidence type="ECO:0000255" key="1">
    <source>
        <dbReference type="HAMAP-Rule" id="MF_00285"/>
    </source>
</evidence>
<organism>
    <name type="scientific">Listeria monocytogenes serotype 4a (strain HCC23)</name>
    <dbReference type="NCBI Taxonomy" id="552536"/>
    <lineage>
        <taxon>Bacteria</taxon>
        <taxon>Bacillati</taxon>
        <taxon>Bacillota</taxon>
        <taxon>Bacilli</taxon>
        <taxon>Bacillales</taxon>
        <taxon>Listeriaceae</taxon>
        <taxon>Listeria</taxon>
    </lineage>
</organism>
<accession>B8DAW1</accession>
<proteinExistence type="inferred from homology"/>
<feature type="chain" id="PRO_1000132607" description="Potassium-transporting ATPase ATP-binding subunit">
    <location>
        <begin position="1"/>
        <end position="681"/>
    </location>
</feature>
<feature type="transmembrane region" description="Helical" evidence="1">
    <location>
        <begin position="30"/>
        <end position="50"/>
    </location>
</feature>
<feature type="transmembrane region" description="Helical" evidence="1">
    <location>
        <begin position="59"/>
        <end position="79"/>
    </location>
</feature>
<feature type="transmembrane region" description="Helical" evidence="1">
    <location>
        <begin position="216"/>
        <end position="236"/>
    </location>
</feature>
<feature type="transmembrane region" description="Helical" evidence="1">
    <location>
        <begin position="255"/>
        <end position="275"/>
    </location>
</feature>
<feature type="transmembrane region" description="Helical" evidence="1">
    <location>
        <begin position="587"/>
        <end position="607"/>
    </location>
</feature>
<feature type="transmembrane region" description="Helical" evidence="1">
    <location>
        <begin position="615"/>
        <end position="635"/>
    </location>
</feature>
<feature type="transmembrane region" description="Helical" evidence="1">
    <location>
        <begin position="661"/>
        <end position="681"/>
    </location>
</feature>
<feature type="active site" description="4-aspartylphosphate intermediate" evidence="1">
    <location>
        <position position="306"/>
    </location>
</feature>
<feature type="binding site" evidence="1">
    <location>
        <position position="343"/>
    </location>
    <ligand>
        <name>ATP</name>
        <dbReference type="ChEBI" id="CHEBI:30616"/>
    </ligand>
</feature>
<feature type="binding site" evidence="1">
    <location>
        <position position="347"/>
    </location>
    <ligand>
        <name>ATP</name>
        <dbReference type="ChEBI" id="CHEBI:30616"/>
    </ligand>
</feature>
<feature type="binding site" evidence="1">
    <location>
        <begin position="376"/>
        <end position="383"/>
    </location>
    <ligand>
        <name>ATP</name>
        <dbReference type="ChEBI" id="CHEBI:30616"/>
    </ligand>
</feature>
<feature type="binding site" evidence="1">
    <location>
        <position position="394"/>
    </location>
    <ligand>
        <name>ATP</name>
        <dbReference type="ChEBI" id="CHEBI:30616"/>
    </ligand>
</feature>
<feature type="binding site" evidence="1">
    <location>
        <position position="517"/>
    </location>
    <ligand>
        <name>Mg(2+)</name>
        <dbReference type="ChEBI" id="CHEBI:18420"/>
    </ligand>
</feature>
<feature type="binding site" evidence="1">
    <location>
        <position position="521"/>
    </location>
    <ligand>
        <name>Mg(2+)</name>
        <dbReference type="ChEBI" id="CHEBI:18420"/>
    </ligand>
</feature>
<protein>
    <recommendedName>
        <fullName evidence="1">Potassium-transporting ATPase ATP-binding subunit</fullName>
        <ecNumber evidence="1">7.2.2.6</ecNumber>
    </recommendedName>
    <alternativeName>
        <fullName evidence="1">ATP phosphohydrolase [potassium-transporting] B chain</fullName>
    </alternativeName>
    <alternativeName>
        <fullName evidence="1">Potassium-binding and translocating subunit B</fullName>
    </alternativeName>
    <alternativeName>
        <fullName evidence="1">Potassium-translocating ATPase B chain</fullName>
    </alternativeName>
</protein>
<sequence length="681" mass="72412">MMEKGIWKDALIQSTKKLSPKLQLKNPVMLLVYVGAILATSLYFLGFFGISDEKSGYTLAIALILWFTVLFANFAEAIAEGRGRAQADSLKMARKDVLARKLKNIDDKTDVIEIASNDLKKGDIVYVLANEQIPMDGEVIEGAASVDESAITGESAPVIRESGGDRSAVTGGTTLVSDWLVVRVTAVSGESFLDKMIAMVEGASRKKTPNEIALQILLVTLSIIFLTVSATLLPFTEFASKQAGAGSAISITNVIALLVCLAPTTIGALLSSIGIAGMSRLNQANVLAMSGRAIEAAGDVDVLLLDKTGTITLGNRKASEFLPVDGVTEQELADAAQLSSIADETAEGRSIVVLAKERFDIRGRDFAEMHAEFVPFTATTRMSGIDYQENTIRKGAADAVRAYVTANGGTYPKECDAIVSKVAGAGGTPLVVVRNNKVLGVIYLKDIVKNGVKERFLDLRKMGIKTIMITGDNPMTAAAIAAEAGVDDFLAEATPEAKLELIREYQREGHLVAMTGDGTNDAPALAQADVAVAMNTGTQAAKEAGNMVDLDSSPTKLIDIVRIGKQLLMTRGALTTFSVANDLAKYFAIIPVLFYGIFPQLEALNLMGLTSPTSAILSAIIYNAVIIIILIPLSLKGVKYREMPAGKLLSRNMLIYGLGGLIAPFIAIKLIDMLLTVLGIV</sequence>
<gene>
    <name evidence="1" type="primary">kdpB</name>
    <name type="ordered locus">LMHCC_2855</name>
</gene>
<reference key="1">
    <citation type="journal article" date="2011" name="J. Bacteriol.">
        <title>Genome sequence of lineage III Listeria monocytogenes strain HCC23.</title>
        <authorList>
            <person name="Steele C.L."/>
            <person name="Donaldson J.R."/>
            <person name="Paul D."/>
            <person name="Banes M.M."/>
            <person name="Arick T."/>
            <person name="Bridges S.M."/>
            <person name="Lawrence M.L."/>
        </authorList>
    </citation>
    <scope>NUCLEOTIDE SEQUENCE [LARGE SCALE GENOMIC DNA]</scope>
    <source>
        <strain>HCC23</strain>
    </source>
</reference>
<name>KDPB_LISMH</name>
<keyword id="KW-0067">ATP-binding</keyword>
<keyword id="KW-1003">Cell membrane</keyword>
<keyword id="KW-0406">Ion transport</keyword>
<keyword id="KW-0460">Magnesium</keyword>
<keyword id="KW-0472">Membrane</keyword>
<keyword id="KW-0479">Metal-binding</keyword>
<keyword id="KW-0547">Nucleotide-binding</keyword>
<keyword id="KW-0597">Phosphoprotein</keyword>
<keyword id="KW-0630">Potassium</keyword>
<keyword id="KW-0633">Potassium transport</keyword>
<keyword id="KW-1278">Translocase</keyword>
<keyword id="KW-0812">Transmembrane</keyword>
<keyword id="KW-1133">Transmembrane helix</keyword>
<keyword id="KW-0813">Transport</keyword>
<dbReference type="EC" id="7.2.2.6" evidence="1"/>
<dbReference type="EMBL" id="CP001175">
    <property type="protein sequence ID" value="ACK41186.1"/>
    <property type="molecule type" value="Genomic_DNA"/>
</dbReference>
<dbReference type="RefSeq" id="WP_012582345.1">
    <property type="nucleotide sequence ID" value="NC_011660.1"/>
</dbReference>
<dbReference type="SMR" id="B8DAW1"/>
<dbReference type="KEGG" id="lmh:LMHCC_2855"/>
<dbReference type="HOGENOM" id="CLU_025728_2_0_9"/>
<dbReference type="GO" id="GO:0005886">
    <property type="term" value="C:plasma membrane"/>
    <property type="evidence" value="ECO:0007669"/>
    <property type="project" value="UniProtKB-SubCell"/>
</dbReference>
<dbReference type="GO" id="GO:0005524">
    <property type="term" value="F:ATP binding"/>
    <property type="evidence" value="ECO:0007669"/>
    <property type="project" value="UniProtKB-UniRule"/>
</dbReference>
<dbReference type="GO" id="GO:0016887">
    <property type="term" value="F:ATP hydrolysis activity"/>
    <property type="evidence" value="ECO:0007669"/>
    <property type="project" value="InterPro"/>
</dbReference>
<dbReference type="GO" id="GO:0000287">
    <property type="term" value="F:magnesium ion binding"/>
    <property type="evidence" value="ECO:0007669"/>
    <property type="project" value="UniProtKB-UniRule"/>
</dbReference>
<dbReference type="GO" id="GO:0008556">
    <property type="term" value="F:P-type potassium transmembrane transporter activity"/>
    <property type="evidence" value="ECO:0007669"/>
    <property type="project" value="UniProtKB-UniRule"/>
</dbReference>
<dbReference type="CDD" id="cd02078">
    <property type="entry name" value="P-type_ATPase_K"/>
    <property type="match status" value="1"/>
</dbReference>
<dbReference type="FunFam" id="2.70.150.10:FF:000010">
    <property type="entry name" value="Potassium-transporting ATPase ATP-binding subunit"/>
    <property type="match status" value="1"/>
</dbReference>
<dbReference type="FunFam" id="3.40.1110.10:FF:000007">
    <property type="entry name" value="Potassium-transporting ATPase ATP-binding subunit"/>
    <property type="match status" value="1"/>
</dbReference>
<dbReference type="Gene3D" id="3.40.1110.10">
    <property type="entry name" value="Calcium-transporting ATPase, cytoplasmic domain N"/>
    <property type="match status" value="1"/>
</dbReference>
<dbReference type="Gene3D" id="2.70.150.10">
    <property type="entry name" value="Calcium-transporting ATPase, cytoplasmic transduction domain A"/>
    <property type="match status" value="1"/>
</dbReference>
<dbReference type="Gene3D" id="3.40.50.1000">
    <property type="entry name" value="HAD superfamily/HAD-like"/>
    <property type="match status" value="1"/>
</dbReference>
<dbReference type="HAMAP" id="MF_00285">
    <property type="entry name" value="KdpB"/>
    <property type="match status" value="1"/>
</dbReference>
<dbReference type="InterPro" id="IPR023299">
    <property type="entry name" value="ATPase_P-typ_cyto_dom_N"/>
</dbReference>
<dbReference type="InterPro" id="IPR018303">
    <property type="entry name" value="ATPase_P-typ_P_site"/>
</dbReference>
<dbReference type="InterPro" id="IPR023298">
    <property type="entry name" value="ATPase_P-typ_TM_dom_sf"/>
</dbReference>
<dbReference type="InterPro" id="IPR008250">
    <property type="entry name" value="ATPase_P-typ_transduc_dom_A_sf"/>
</dbReference>
<dbReference type="InterPro" id="IPR036412">
    <property type="entry name" value="HAD-like_sf"/>
</dbReference>
<dbReference type="InterPro" id="IPR023214">
    <property type="entry name" value="HAD_sf"/>
</dbReference>
<dbReference type="InterPro" id="IPR006391">
    <property type="entry name" value="P-type_ATPase_bsu_IA"/>
</dbReference>
<dbReference type="InterPro" id="IPR001757">
    <property type="entry name" value="P_typ_ATPase"/>
</dbReference>
<dbReference type="InterPro" id="IPR044492">
    <property type="entry name" value="P_typ_ATPase_HD_dom"/>
</dbReference>
<dbReference type="NCBIfam" id="TIGR01494">
    <property type="entry name" value="ATPase_P-type"/>
    <property type="match status" value="2"/>
</dbReference>
<dbReference type="NCBIfam" id="TIGR01497">
    <property type="entry name" value="kdpB"/>
    <property type="match status" value="1"/>
</dbReference>
<dbReference type="PANTHER" id="PTHR43743">
    <property type="entry name" value="POTASSIUM-TRANSPORTING ATPASE ATP-BINDING SUBUNIT"/>
    <property type="match status" value="1"/>
</dbReference>
<dbReference type="PANTHER" id="PTHR43743:SF1">
    <property type="entry name" value="POTASSIUM-TRANSPORTING ATPASE ATP-BINDING SUBUNIT"/>
    <property type="match status" value="1"/>
</dbReference>
<dbReference type="Pfam" id="PF00122">
    <property type="entry name" value="E1-E2_ATPase"/>
    <property type="match status" value="1"/>
</dbReference>
<dbReference type="Pfam" id="PF00702">
    <property type="entry name" value="Hydrolase"/>
    <property type="match status" value="1"/>
</dbReference>
<dbReference type="PRINTS" id="PR00119">
    <property type="entry name" value="CATATPASE"/>
</dbReference>
<dbReference type="PRINTS" id="PR00120">
    <property type="entry name" value="HATPASE"/>
</dbReference>
<dbReference type="SFLD" id="SFLDG00002">
    <property type="entry name" value="C1.7:_P-type_atpase_like"/>
    <property type="match status" value="1"/>
</dbReference>
<dbReference type="SFLD" id="SFLDF00027">
    <property type="entry name" value="p-type_atpase"/>
    <property type="match status" value="1"/>
</dbReference>
<dbReference type="SUPFAM" id="SSF81653">
    <property type="entry name" value="Calcium ATPase, transduction domain A"/>
    <property type="match status" value="1"/>
</dbReference>
<dbReference type="SUPFAM" id="SSF81665">
    <property type="entry name" value="Calcium ATPase, transmembrane domain M"/>
    <property type="match status" value="1"/>
</dbReference>
<dbReference type="SUPFAM" id="SSF56784">
    <property type="entry name" value="HAD-like"/>
    <property type="match status" value="1"/>
</dbReference>
<dbReference type="SUPFAM" id="SSF81660">
    <property type="entry name" value="Metal cation-transporting ATPase, ATP-binding domain N"/>
    <property type="match status" value="1"/>
</dbReference>
<dbReference type="PROSITE" id="PS00154">
    <property type="entry name" value="ATPASE_E1_E2"/>
    <property type="match status" value="1"/>
</dbReference>